<feature type="chain" id="PRO_0000417570" description="Decaprenyl diphosphate synthase">
    <location>
        <begin position="1"/>
        <end position="293"/>
    </location>
</feature>
<feature type="region of interest" description="Disordered" evidence="2">
    <location>
        <begin position="1"/>
        <end position="24"/>
    </location>
</feature>
<feature type="active site" evidence="1">
    <location>
        <position position="73"/>
    </location>
</feature>
<feature type="active site" description="Proton acceptor" evidence="1">
    <location>
        <position position="121"/>
    </location>
</feature>
<feature type="binding site" evidence="1">
    <location>
        <position position="73"/>
    </location>
    <ligand>
        <name>Mg(2+)</name>
        <dbReference type="ChEBI" id="CHEBI:18420"/>
    </ligand>
</feature>
<feature type="binding site" evidence="1">
    <location>
        <begin position="74"/>
        <end position="77"/>
    </location>
    <ligand>
        <name>substrate</name>
    </ligand>
</feature>
<feature type="binding site" evidence="1">
    <location>
        <position position="78"/>
    </location>
    <ligand>
        <name>substrate</name>
    </ligand>
</feature>
<feature type="binding site" evidence="1">
    <location>
        <position position="86"/>
    </location>
    <ligand>
        <name>substrate</name>
    </ligand>
</feature>
<feature type="binding site" evidence="1">
    <location>
        <position position="90"/>
    </location>
    <ligand>
        <name>substrate</name>
    </ligand>
</feature>
<feature type="binding site" evidence="1">
    <location>
        <begin position="118"/>
        <end position="120"/>
    </location>
    <ligand>
        <name>substrate</name>
    </ligand>
</feature>
<feature type="binding site" evidence="1">
    <location>
        <position position="122"/>
    </location>
    <ligand>
        <name>substrate</name>
    </ligand>
</feature>
<feature type="binding site" evidence="1">
    <location>
        <position position="124"/>
    </location>
    <ligand>
        <name>substrate</name>
    </ligand>
</feature>
<feature type="binding site" evidence="1">
    <location>
        <position position="241"/>
    </location>
    <ligand>
        <name>substrate</name>
    </ligand>
</feature>
<feature type="binding site" evidence="1">
    <location>
        <begin position="247"/>
        <end position="249"/>
    </location>
    <ligand>
        <name>substrate</name>
    </ligand>
</feature>
<feature type="binding site" evidence="1">
    <location>
        <position position="260"/>
    </location>
    <ligand>
        <name>Mg(2+)</name>
        <dbReference type="ChEBI" id="CHEBI:18420"/>
    </ligand>
</feature>
<organism>
    <name type="scientific">Mycolicibacterium smegmatis (strain ATCC 700084 / mc(2)155)</name>
    <name type="common">Mycobacterium smegmatis</name>
    <dbReference type="NCBI Taxonomy" id="246196"/>
    <lineage>
        <taxon>Bacteria</taxon>
        <taxon>Bacillati</taxon>
        <taxon>Actinomycetota</taxon>
        <taxon>Actinomycetes</taxon>
        <taxon>Mycobacteriales</taxon>
        <taxon>Mycobacteriaceae</taxon>
        <taxon>Mycolicibacterium</taxon>
    </lineage>
</organism>
<accession>A0R0S4</accession>
<accession>I7FQ48</accession>
<gene>
    <name type="primary">uppS</name>
    <name type="ordered locus">MSMEG_4490</name>
    <name type="ordered locus">MSMEI_4379</name>
</gene>
<proteinExistence type="evidence at protein level"/>
<keyword id="KW-1003">Cell membrane</keyword>
<keyword id="KW-0460">Magnesium</keyword>
<keyword id="KW-0472">Membrane</keyword>
<keyword id="KW-0479">Metal-binding</keyword>
<keyword id="KW-1185">Reference proteome</keyword>
<keyword id="KW-0808">Transferase</keyword>
<dbReference type="EC" id="2.5.1.86"/>
<dbReference type="EC" id="2.5.1.87"/>
<dbReference type="EMBL" id="CP000480">
    <property type="protein sequence ID" value="ABK71014.1"/>
    <property type="molecule type" value="Genomic_DNA"/>
</dbReference>
<dbReference type="EMBL" id="CP001663">
    <property type="protein sequence ID" value="AFP40833.1"/>
    <property type="molecule type" value="Genomic_DNA"/>
</dbReference>
<dbReference type="RefSeq" id="WP_011729873.1">
    <property type="nucleotide sequence ID" value="NZ_SIJM01000026.1"/>
</dbReference>
<dbReference type="RefSeq" id="YP_888762.1">
    <property type="nucleotide sequence ID" value="NC_008596.1"/>
</dbReference>
<dbReference type="SMR" id="A0R0S4"/>
<dbReference type="STRING" id="246196.MSMEG_4490"/>
<dbReference type="PaxDb" id="246196-MSMEI_4379"/>
<dbReference type="KEGG" id="msb:LJ00_22215"/>
<dbReference type="KEGG" id="msg:MSMEI_4379"/>
<dbReference type="KEGG" id="msm:MSMEG_4490"/>
<dbReference type="PATRIC" id="fig|246196.19.peg.4396"/>
<dbReference type="eggNOG" id="COG0020">
    <property type="taxonomic scope" value="Bacteria"/>
</dbReference>
<dbReference type="OrthoDB" id="4191603at2"/>
<dbReference type="Proteomes" id="UP000000757">
    <property type="component" value="Chromosome"/>
</dbReference>
<dbReference type="Proteomes" id="UP000006158">
    <property type="component" value="Chromosome"/>
</dbReference>
<dbReference type="GO" id="GO:0005829">
    <property type="term" value="C:cytosol"/>
    <property type="evidence" value="ECO:0007669"/>
    <property type="project" value="TreeGrafter"/>
</dbReference>
<dbReference type="GO" id="GO:0005886">
    <property type="term" value="C:plasma membrane"/>
    <property type="evidence" value="ECO:0000314"/>
    <property type="project" value="UniProtKB"/>
</dbReference>
<dbReference type="GO" id="GO:0008834">
    <property type="term" value="F:ditrans,polycis-undecaprenyl-diphosphate synthase [(2E,6E)-farnesyl-diphosphate specific] activity"/>
    <property type="evidence" value="ECO:0000314"/>
    <property type="project" value="UniProtKB"/>
</dbReference>
<dbReference type="GO" id="GO:0000287">
    <property type="term" value="F:magnesium ion binding"/>
    <property type="evidence" value="ECO:0007669"/>
    <property type="project" value="UniProtKB-UniRule"/>
</dbReference>
<dbReference type="GO" id="GO:0030145">
    <property type="term" value="F:manganese ion binding"/>
    <property type="evidence" value="ECO:0007669"/>
    <property type="project" value="TreeGrafter"/>
</dbReference>
<dbReference type="GO" id="GO:0033850">
    <property type="term" value="F:Z-farnesyl diphosphate synthase activity"/>
    <property type="evidence" value="ECO:0000314"/>
    <property type="project" value="UniProtKB"/>
</dbReference>
<dbReference type="GO" id="GO:0016094">
    <property type="term" value="P:polyprenol biosynthetic process"/>
    <property type="evidence" value="ECO:0007669"/>
    <property type="project" value="TreeGrafter"/>
</dbReference>
<dbReference type="CDD" id="cd00475">
    <property type="entry name" value="Cis_IPPS"/>
    <property type="match status" value="1"/>
</dbReference>
<dbReference type="FunFam" id="3.40.1180.10:FF:000004">
    <property type="entry name" value="Isoprenyl transferase"/>
    <property type="match status" value="1"/>
</dbReference>
<dbReference type="Gene3D" id="3.40.1180.10">
    <property type="entry name" value="Decaprenyl diphosphate synthase-like"/>
    <property type="match status" value="1"/>
</dbReference>
<dbReference type="HAMAP" id="MF_01139">
    <property type="entry name" value="ISPT"/>
    <property type="match status" value="1"/>
</dbReference>
<dbReference type="InterPro" id="IPR001441">
    <property type="entry name" value="UPP_synth-like"/>
</dbReference>
<dbReference type="InterPro" id="IPR018520">
    <property type="entry name" value="UPP_synth-like_CS"/>
</dbReference>
<dbReference type="InterPro" id="IPR036424">
    <property type="entry name" value="UPP_synth-like_sf"/>
</dbReference>
<dbReference type="NCBIfam" id="NF011402">
    <property type="entry name" value="PRK14827.1"/>
    <property type="match status" value="1"/>
</dbReference>
<dbReference type="NCBIfam" id="NF011404">
    <property type="entry name" value="PRK14829.1"/>
    <property type="match status" value="1"/>
</dbReference>
<dbReference type="NCBIfam" id="TIGR00055">
    <property type="entry name" value="uppS"/>
    <property type="match status" value="1"/>
</dbReference>
<dbReference type="PANTHER" id="PTHR10291:SF0">
    <property type="entry name" value="DEHYDRODOLICHYL DIPHOSPHATE SYNTHASE 2"/>
    <property type="match status" value="1"/>
</dbReference>
<dbReference type="PANTHER" id="PTHR10291">
    <property type="entry name" value="DEHYDRODOLICHYL DIPHOSPHATE SYNTHASE FAMILY MEMBER"/>
    <property type="match status" value="1"/>
</dbReference>
<dbReference type="Pfam" id="PF01255">
    <property type="entry name" value="Prenyltransf"/>
    <property type="match status" value="1"/>
</dbReference>
<dbReference type="SUPFAM" id="SSF64005">
    <property type="entry name" value="Undecaprenyl diphosphate synthase"/>
    <property type="match status" value="1"/>
</dbReference>
<dbReference type="PROSITE" id="PS01066">
    <property type="entry name" value="UPP_SYNTHASE"/>
    <property type="match status" value="1"/>
</dbReference>
<comment type="function">
    <text evidence="3">Catalyzes the sequential condensation of isopentenyl diphosphate (IPP) in the cis configuration with (2Z,6E)-farnesyl diphosphate (Z-FPP or EZ-FPP) generating the 50 carbon product trans,polycis-decaprenyl diphosphate. When (2E,6E)-farnesyl diphosphate (E-FPP or EE-FPP) is used in vitro, both primary products decaprenyl diphosphate and heptaprenyl diphosphate are synthesized. It is probably due to the fact that M.smegmatis synthesizes both (2E,6E,10E)-geranylgeranyl diphosphate (EEE-GGPP) and (2E,6E,10Z)-geranylgeranyl diphosphate (EEZ-GGPP). Can also accept many different allylic substrates, including E-geranyl diphosphate (E-GPP), neryl diphosphate (NPP), and all-trans-geranyl-geranyl diphosphate.</text>
</comment>
<comment type="catalytic activity">
    <reaction>
        <text>(2Z,6E)-farnesyl diphosphate + 7 isopentenyl diphosphate = (2Z,6Z,10Z,14Z,18Z,22Z,26Z,30Z,34E)-decaprenyl diphosphate + 7 diphosphate</text>
        <dbReference type="Rhea" id="RHEA:47096"/>
        <dbReference type="ChEBI" id="CHEBI:33019"/>
        <dbReference type="ChEBI" id="CHEBI:87356"/>
        <dbReference type="ChEBI" id="CHEBI:128769"/>
        <dbReference type="ChEBI" id="CHEBI:162247"/>
        <dbReference type="EC" id="2.5.1.86"/>
    </reaction>
</comment>
<comment type="catalytic activity">
    <reaction>
        <text>n isopentenyl diphosphate + (2E,6E)-farnesyl diphosphate = a di-trans,poly-cis-polyprenyl diphosphate + n diphosphate</text>
        <dbReference type="Rhea" id="RHEA:53008"/>
        <dbReference type="Rhea" id="RHEA-COMP:19494"/>
        <dbReference type="ChEBI" id="CHEBI:33019"/>
        <dbReference type="ChEBI" id="CHEBI:128769"/>
        <dbReference type="ChEBI" id="CHEBI:136960"/>
        <dbReference type="ChEBI" id="CHEBI:175763"/>
        <dbReference type="EC" id="2.5.1.87"/>
    </reaction>
</comment>
<comment type="cofactor">
    <cofactor evidence="1">
        <name>Mg(2+)</name>
        <dbReference type="ChEBI" id="CHEBI:18420"/>
    </cofactor>
    <text evidence="1">Binds 2 magnesium ions per subunit.</text>
</comment>
<comment type="subunit">
    <text evidence="1">Homodimer.</text>
</comment>
<comment type="subcellular location">
    <subcellularLocation>
        <location evidence="3">Cell membrane</location>
    </subcellularLocation>
</comment>
<comment type="similarity">
    <text evidence="4">Belongs to the UPP synthase family.</text>
</comment>
<evidence type="ECO:0000250" key="1"/>
<evidence type="ECO:0000256" key="2">
    <source>
        <dbReference type="SAM" id="MobiDB-lite"/>
    </source>
</evidence>
<evidence type="ECO:0000269" key="3">
    <source>
    </source>
</evidence>
<evidence type="ECO:0000305" key="4"/>
<name>DPDS_MYCS2</name>
<protein>
    <recommendedName>
        <fullName>Decaprenyl diphosphate synthase</fullName>
        <shortName>DecaPP</shortName>
        <ecNumber>2.5.1.86</ecNumber>
        <ecNumber>2.5.1.87</ecNumber>
    </recommendedName>
    <alternativeName>
        <fullName>Decaprenyl pyrophosphate synthase</fullName>
    </alternativeName>
    <alternativeName>
        <fullName>Long-chain isoprenyl diphosphate synthase</fullName>
    </alternativeName>
    <alternativeName>
        <fullName>Trans,polycis-decaprenyl diphosphate synthase</fullName>
    </alternativeName>
</protein>
<reference key="1">
    <citation type="submission" date="2006-10" db="EMBL/GenBank/DDBJ databases">
        <authorList>
            <person name="Fleischmann R.D."/>
            <person name="Dodson R.J."/>
            <person name="Haft D.H."/>
            <person name="Merkel J.S."/>
            <person name="Nelson W.C."/>
            <person name="Fraser C.M."/>
        </authorList>
    </citation>
    <scope>NUCLEOTIDE SEQUENCE [LARGE SCALE GENOMIC DNA]</scope>
    <source>
        <strain>ATCC 700084 / mc(2)155</strain>
    </source>
</reference>
<reference key="2">
    <citation type="journal article" date="2007" name="Genome Biol.">
        <title>Interrupted coding sequences in Mycobacterium smegmatis: authentic mutations or sequencing errors?</title>
        <authorList>
            <person name="Deshayes C."/>
            <person name="Perrodou E."/>
            <person name="Gallien S."/>
            <person name="Euphrasie D."/>
            <person name="Schaeffer C."/>
            <person name="Van-Dorsselaer A."/>
            <person name="Poch O."/>
            <person name="Lecompte O."/>
            <person name="Reyrat J.-M."/>
        </authorList>
    </citation>
    <scope>NUCLEOTIDE SEQUENCE [LARGE SCALE GENOMIC DNA]</scope>
    <source>
        <strain>ATCC 700084 / mc(2)155</strain>
    </source>
</reference>
<reference key="3">
    <citation type="journal article" date="2009" name="Genome Res.">
        <title>Ortho-proteogenomics: multiple proteomes investigation through orthology and a new MS-based protocol.</title>
        <authorList>
            <person name="Gallien S."/>
            <person name="Perrodou E."/>
            <person name="Carapito C."/>
            <person name="Deshayes C."/>
            <person name="Reyrat J.-M."/>
            <person name="Van Dorsselaer A."/>
            <person name="Poch O."/>
            <person name="Schaeffer C."/>
            <person name="Lecompte O."/>
        </authorList>
    </citation>
    <scope>NUCLEOTIDE SEQUENCE [LARGE SCALE GENOMIC DNA]</scope>
    <source>
        <strain>ATCC 700084 / mc(2)155</strain>
    </source>
</reference>
<reference key="4">
    <citation type="journal article" date="2000" name="J. Bacteriol.">
        <title>Polyprenyl phosphate biosynthesis in Mycobacterium tuberculosis and Mycobacterium smegmatis.</title>
        <authorList>
            <person name="Crick D.C."/>
            <person name="Schulbach M.C."/>
            <person name="Zink E.E."/>
            <person name="Macchia M."/>
            <person name="Barontini S."/>
            <person name="Besra G.S."/>
            <person name="Brennan P.J."/>
        </authorList>
    </citation>
    <scope>FUNCTION AS FARNESYL DIPHOSPHATE SYNTHASE</scope>
    <scope>SUBCELLULAR LOCATION</scope>
</reference>
<sequence length="293" mass="33484">MATTRGKKTYPQLPPAPDDYPTFPDKSTWPVVFPEIPAGTNGRFARPPQHTSKAAAPKIPADQVPNHVAVVMDGNGRWATQRGLGRTEGHKMGEAVLIDITCGAIEIGIKHLTVYAFSTENWKRSTEEVRFLMGFNREVVRRRRENLNDMGVRMRWVGSRPRMWRSVIKEFDIAEQMTVDNDVITINYCVNYGGRTEIVEAARALAQEAVDGKINPARISEAMFAKHLHRADIPDVDLFIRTSGEQRASNFLLWQAAYAEYVFQDKLWPDYDRRDLWAACEEYVNRNRRFGRA</sequence>